<comment type="function">
    <text evidence="3 4 5 7 8 9">Required for DNA interstrand cross-link repair. This requires cleavage of cross-linked DNA to generate DNA double strand breaks (DSBs). This protein has 5' exonuclease activity on single-stranded and double-stranded DNA, which appears to be necessary for the processing of DNA double strand breaks prior to ligation.</text>
</comment>
<comment type="subcellular location">
    <subcellularLocation>
        <location evidence="12">Nucleus</location>
    </subcellularLocation>
</comment>
<comment type="induction">
    <text evidence="11">Expression is increased by ultraviolet light and agents which induce DNA cross-links such as nitrogen mustard and psoralen.</text>
</comment>
<comment type="miscellaneous">
    <text evidence="6">Present with 259 molecules/cell in log phase SD medium.</text>
</comment>
<comment type="similarity">
    <text evidence="12">Belongs to the DNA repair metallo-beta-lactamase (DRMBL) family.</text>
</comment>
<evidence type="ECO:0000255" key="1">
    <source>
        <dbReference type="PROSITE-ProRule" id="PRU01256"/>
    </source>
</evidence>
<evidence type="ECO:0000256" key="2">
    <source>
        <dbReference type="SAM" id="MobiDB-lite"/>
    </source>
</evidence>
<evidence type="ECO:0000269" key="3">
    <source>
    </source>
</evidence>
<evidence type="ECO:0000269" key="4">
    <source>
    </source>
</evidence>
<evidence type="ECO:0000269" key="5">
    <source>
    </source>
</evidence>
<evidence type="ECO:0000269" key="6">
    <source>
    </source>
</evidence>
<evidence type="ECO:0000269" key="7">
    <source>
    </source>
</evidence>
<evidence type="ECO:0000269" key="8">
    <source>
    </source>
</evidence>
<evidence type="ECO:0000269" key="9">
    <source>
    </source>
</evidence>
<evidence type="ECO:0000269" key="10">
    <source>
    </source>
</evidence>
<evidence type="ECO:0000269" key="11">
    <source>
    </source>
</evidence>
<evidence type="ECO:0000305" key="12"/>
<dbReference type="EC" id="3.1.-.-"/>
<dbReference type="EMBL" id="X64004">
    <property type="protein sequence ID" value="CAA45405.1"/>
    <property type="molecule type" value="Genomic_DNA"/>
</dbReference>
<dbReference type="EMBL" id="Z47071">
    <property type="protein sequence ID" value="CAA87351.1"/>
    <property type="molecule type" value="Genomic_DNA"/>
</dbReference>
<dbReference type="EMBL" id="X76917">
    <property type="protein sequence ID" value="CAA54243.1"/>
    <property type="molecule type" value="Genomic_DNA"/>
</dbReference>
<dbReference type="EMBL" id="BK006946">
    <property type="protein sequence ID" value="DAA10034.1"/>
    <property type="molecule type" value="Genomic_DNA"/>
</dbReference>
<dbReference type="PIR" id="S19646">
    <property type="entry name" value="S19646"/>
</dbReference>
<dbReference type="RefSeq" id="NP_013857.1">
    <property type="nucleotide sequence ID" value="NM_001182639.1"/>
</dbReference>
<dbReference type="SMR" id="P30620"/>
<dbReference type="BioGRID" id="35314">
    <property type="interactions" value="146"/>
</dbReference>
<dbReference type="DIP" id="DIP-6301N"/>
<dbReference type="FunCoup" id="P30620">
    <property type="interactions" value="288"/>
</dbReference>
<dbReference type="IntAct" id="P30620">
    <property type="interactions" value="13"/>
</dbReference>
<dbReference type="MINT" id="P30620"/>
<dbReference type="STRING" id="4932.YMR137C"/>
<dbReference type="iPTMnet" id="P30620"/>
<dbReference type="PaxDb" id="4932-YMR137C"/>
<dbReference type="PeptideAtlas" id="P30620"/>
<dbReference type="EnsemblFungi" id="YMR137C_mRNA">
    <property type="protein sequence ID" value="YMR137C"/>
    <property type="gene ID" value="YMR137C"/>
</dbReference>
<dbReference type="GeneID" id="855168"/>
<dbReference type="KEGG" id="sce:YMR137C"/>
<dbReference type="AGR" id="SGD:S000004745"/>
<dbReference type="SGD" id="S000004745">
    <property type="gene designation" value="PSO2"/>
</dbReference>
<dbReference type="VEuPathDB" id="FungiDB:YMR137C"/>
<dbReference type="eggNOG" id="KOG1361">
    <property type="taxonomic scope" value="Eukaryota"/>
</dbReference>
<dbReference type="GeneTree" id="ENSGT00940000158766"/>
<dbReference type="HOGENOM" id="CLU_005260_7_0_1"/>
<dbReference type="InParanoid" id="P30620"/>
<dbReference type="OMA" id="AQVHMHS"/>
<dbReference type="OrthoDB" id="262529at2759"/>
<dbReference type="BioCyc" id="YEAST:G3O-32830-MONOMER"/>
<dbReference type="BioGRID-ORCS" id="855168">
    <property type="hits" value="1 hit in 10 CRISPR screens"/>
</dbReference>
<dbReference type="PRO" id="PR:P30620"/>
<dbReference type="Proteomes" id="UP000002311">
    <property type="component" value="Chromosome XIII"/>
</dbReference>
<dbReference type="RNAct" id="P30620">
    <property type="molecule type" value="protein"/>
</dbReference>
<dbReference type="GO" id="GO:0005759">
    <property type="term" value="C:mitochondrial matrix"/>
    <property type="evidence" value="ECO:0000314"/>
    <property type="project" value="SGD"/>
</dbReference>
<dbReference type="GO" id="GO:0005634">
    <property type="term" value="C:nucleus"/>
    <property type="evidence" value="ECO:0007005"/>
    <property type="project" value="SGD"/>
</dbReference>
<dbReference type="GO" id="GO:0035312">
    <property type="term" value="F:5'-3' DNA exonuclease activity"/>
    <property type="evidence" value="ECO:0000318"/>
    <property type="project" value="GO_Central"/>
</dbReference>
<dbReference type="GO" id="GO:0008409">
    <property type="term" value="F:5'-3' exonuclease activity"/>
    <property type="evidence" value="ECO:0000314"/>
    <property type="project" value="SGD"/>
</dbReference>
<dbReference type="GO" id="GO:0003684">
    <property type="term" value="F:damaged DNA binding"/>
    <property type="evidence" value="ECO:0000315"/>
    <property type="project" value="SGD"/>
</dbReference>
<dbReference type="GO" id="GO:0008270">
    <property type="term" value="F:zinc ion binding"/>
    <property type="evidence" value="ECO:0007669"/>
    <property type="project" value="UniProtKB-KW"/>
</dbReference>
<dbReference type="GO" id="GO:0006281">
    <property type="term" value="P:DNA repair"/>
    <property type="evidence" value="ECO:0000315"/>
    <property type="project" value="SGD"/>
</dbReference>
<dbReference type="GO" id="GO:0006303">
    <property type="term" value="P:double-strand break repair via nonhomologous end joining"/>
    <property type="evidence" value="ECO:0000318"/>
    <property type="project" value="GO_Central"/>
</dbReference>
<dbReference type="GO" id="GO:0036297">
    <property type="term" value="P:interstrand cross-link repair"/>
    <property type="evidence" value="ECO:0000315"/>
    <property type="project" value="SGD"/>
</dbReference>
<dbReference type="CDD" id="cd16273">
    <property type="entry name" value="SNM1A-1C-like_MBL-fold"/>
    <property type="match status" value="1"/>
</dbReference>
<dbReference type="FunFam" id="3.60.15.10:FF:000061">
    <property type="entry name" value="Interstrand crosslink repair protein"/>
    <property type="match status" value="1"/>
</dbReference>
<dbReference type="Gene3D" id="3.40.50.12650">
    <property type="match status" value="1"/>
</dbReference>
<dbReference type="Gene3D" id="3.60.15.10">
    <property type="entry name" value="Ribonuclease Z/Hydroxyacylglutathione hydrolase-like"/>
    <property type="match status" value="1"/>
</dbReference>
<dbReference type="InterPro" id="IPR011084">
    <property type="entry name" value="DRMBL"/>
</dbReference>
<dbReference type="InterPro" id="IPR006642">
    <property type="entry name" value="Rad18_UBZ4"/>
</dbReference>
<dbReference type="InterPro" id="IPR036866">
    <property type="entry name" value="RibonucZ/Hydroxyglut_hydro"/>
</dbReference>
<dbReference type="PANTHER" id="PTHR23240:SF6">
    <property type="entry name" value="DNA CROSS-LINK REPAIR 1A PROTEIN"/>
    <property type="match status" value="1"/>
</dbReference>
<dbReference type="PANTHER" id="PTHR23240">
    <property type="entry name" value="DNA CROSS-LINK REPAIR PROTEIN PSO2/SNM1-RELATED"/>
    <property type="match status" value="1"/>
</dbReference>
<dbReference type="Pfam" id="PF07522">
    <property type="entry name" value="DRMBL"/>
    <property type="match status" value="1"/>
</dbReference>
<dbReference type="SUPFAM" id="SSF56281">
    <property type="entry name" value="Metallo-hydrolase/oxidoreductase"/>
    <property type="match status" value="1"/>
</dbReference>
<dbReference type="PROSITE" id="PS51908">
    <property type="entry name" value="ZF_UBZ4"/>
    <property type="match status" value="1"/>
</dbReference>
<protein>
    <recommendedName>
        <fullName>DNA cross-link repair protein PSO2/SNM1</fullName>
        <ecNumber>3.1.-.-</ecNumber>
    </recommendedName>
</protein>
<organism>
    <name type="scientific">Saccharomyces cerevisiae (strain ATCC 204508 / S288c)</name>
    <name type="common">Baker's yeast</name>
    <dbReference type="NCBI Taxonomy" id="559292"/>
    <lineage>
        <taxon>Eukaryota</taxon>
        <taxon>Fungi</taxon>
        <taxon>Dikarya</taxon>
        <taxon>Ascomycota</taxon>
        <taxon>Saccharomycotina</taxon>
        <taxon>Saccharomycetes</taxon>
        <taxon>Saccharomycetales</taxon>
        <taxon>Saccharomycetaceae</taxon>
        <taxon>Saccharomyces</taxon>
    </lineage>
</organism>
<gene>
    <name type="primary">PSO2</name>
    <name type="synonym">SNM1</name>
    <name type="ordered locus">YMR137C</name>
    <name type="ORF">YM9375.06C</name>
</gene>
<sequence>MSRKSIVQIRRSEVKRKRSSTASSTSEGKTLHKNTHTSSKRQRTLTEFNIPTSSNLPVRSSSYSFSRFSCSTSNKNTEPVIINDDDHNSICLEDTAKVEITIDTDEEELVSLHDNEVSAIENRTEDRIVTELEEQVNVKVSTEVIQCPICLENLSHLELYERETHCDTCIGSDPSNMGTPKKNIRSFISNPSSPAKTKRDIATSKKPTRVKLVLPSFKIIKFNNGHEIVVDGFNYKASETISQYFLSHFHSDHYIGLKKSWNNPDENPIKKTLYCSKITAILVNLKFKIPMDEIQILPMNKRFWITDTISVVTLDANHCPGAIIMLFQEFLANSYDKPIRQILHTGDFRSNAKMIETIQKWLAETANETIDQVYLDTTYMTMGYNFPSQHSVCETVADFTLRLIKHGKNKTFGDSQRNLFHFQRKKTLTTHRYRVLFLVGTYTIGKEKLAIKICEFLKTKLFVMPNSVKFSMMLTVLQNNENQNDMWDESLLTSNLHESSVHLVPIRVLKSQETIEAYLKSLKELETDYVKDIEDVVGFIPTGWSHNFGLKYQKKNDDDENEMSGNTEYCLELMKNDRDNDDENGFEISSILRQYKKYNKFQVFNVPYSEHSSFNDLVKFGCKLKCSEVIPTVNLNNLWKVRYMTNWFQCWENVRKTRAAK</sequence>
<feature type="chain" id="PRO_0000209130" description="DNA cross-link repair protein PSO2/SNM1">
    <location>
        <begin position="1"/>
        <end position="661"/>
    </location>
</feature>
<feature type="zinc finger region" description="UBZ4-type" evidence="1">
    <location>
        <begin position="144"/>
        <end position="174"/>
    </location>
</feature>
<feature type="region of interest" description="Disordered" evidence="2">
    <location>
        <begin position="1"/>
        <end position="44"/>
    </location>
</feature>
<feature type="compositionally biased region" description="Basic residues" evidence="2">
    <location>
        <begin position="31"/>
        <end position="43"/>
    </location>
</feature>
<feature type="binding site" evidence="1">
    <location>
        <position position="147"/>
    </location>
    <ligand>
        <name>Zn(2+)</name>
        <dbReference type="ChEBI" id="CHEBI:29105"/>
    </ligand>
</feature>
<feature type="binding site" evidence="1">
    <location>
        <position position="150"/>
    </location>
    <ligand>
        <name>Zn(2+)</name>
        <dbReference type="ChEBI" id="CHEBI:29105"/>
    </ligand>
</feature>
<feature type="binding site" evidence="1">
    <location>
        <position position="165"/>
    </location>
    <ligand>
        <name>Zn(2+)</name>
        <dbReference type="ChEBI" id="CHEBI:29105"/>
    </ligand>
</feature>
<feature type="binding site" evidence="1">
    <location>
        <position position="169"/>
    </location>
    <ligand>
        <name>Zn(2+)</name>
        <dbReference type="ChEBI" id="CHEBI:29105"/>
    </ligand>
</feature>
<feature type="mutagenesis site" description="Abrogates exonuclease activity." evidence="5 8">
    <original>D</original>
    <variation>A</variation>
    <location>
        <position position="252"/>
    </location>
</feature>
<feature type="mutagenesis site" description="In SNM1-2; increased sensitivity to DNA cross-linking agents at 36 degrees Celsius." evidence="10">
    <original>G</original>
    <variation>R</variation>
    <location>
        <position position="256"/>
    </location>
</feature>
<name>PSO2_YEAST</name>
<accession>P30620</accession>
<accession>D6VZW0</accession>
<accession>Q07072</accession>
<reference key="1">
    <citation type="journal article" date="1992" name="Mol. Gen. Genet.">
        <title>Molecular structure of the DNA cross-link repair gene SNM1 (PSO2) of the yeast Saccharomyces cerevisiae.</title>
        <authorList>
            <person name="Richter D."/>
            <person name="Niegemann E."/>
            <person name="Brendel M."/>
        </authorList>
    </citation>
    <scope>NUCLEOTIDE SEQUENCE [GENOMIC DNA]</scope>
</reference>
<reference key="2">
    <citation type="journal article" date="1997" name="Nature">
        <title>The nucleotide sequence of Saccharomyces cerevisiae chromosome XIII.</title>
        <authorList>
            <person name="Bowman S."/>
            <person name="Churcher C.M."/>
            <person name="Badcock K."/>
            <person name="Brown D."/>
            <person name="Chillingworth T."/>
            <person name="Connor R."/>
            <person name="Dedman K."/>
            <person name="Devlin K."/>
            <person name="Gentles S."/>
            <person name="Hamlin N."/>
            <person name="Hunt S."/>
            <person name="Jagels K."/>
            <person name="Lye G."/>
            <person name="Moule S."/>
            <person name="Odell C."/>
            <person name="Pearson D."/>
            <person name="Rajandream M.A."/>
            <person name="Rice P."/>
            <person name="Skelton J."/>
            <person name="Walsh S.V."/>
            <person name="Whitehead S."/>
            <person name="Barrell B.G."/>
        </authorList>
    </citation>
    <scope>NUCLEOTIDE SEQUENCE [LARGE SCALE GENOMIC DNA]</scope>
    <source>
        <strain>ATCC 204508 / S288c</strain>
    </source>
</reference>
<reference key="3">
    <citation type="journal article" date="2014" name="G3 (Bethesda)">
        <title>The reference genome sequence of Saccharomyces cerevisiae: Then and now.</title>
        <authorList>
            <person name="Engel S.R."/>
            <person name="Dietrich F.S."/>
            <person name="Fisk D.G."/>
            <person name="Binkley G."/>
            <person name="Balakrishnan R."/>
            <person name="Costanzo M.C."/>
            <person name="Dwight S.S."/>
            <person name="Hitz B.C."/>
            <person name="Karra K."/>
            <person name="Nash R.S."/>
            <person name="Weng S."/>
            <person name="Wong E.D."/>
            <person name="Lloyd P."/>
            <person name="Skrzypek M.S."/>
            <person name="Miyasato S.R."/>
            <person name="Simison M."/>
            <person name="Cherry J.M."/>
        </authorList>
    </citation>
    <scope>GENOME REANNOTATION</scope>
    <source>
        <strain>ATCC 204508 / S288c</strain>
    </source>
</reference>
<reference key="4">
    <citation type="journal article" date="1994" name="Mutat. Res.">
        <title>A single amino acid change in SNM1-encoded protein leads to thermoconditional deficiency for DNA cross-link repair in Saccharomyces cerevisiae.</title>
        <authorList>
            <person name="Niegmann E."/>
            <person name="Brendel M."/>
        </authorList>
    </citation>
    <scope>NUCLEOTIDE SEQUENCE [GENOMIC DNA] OF 252-467</scope>
    <scope>MUTAGENESIS OF GLY-256</scope>
</reference>
<reference key="5">
    <citation type="journal article" date="1996" name="Mol. Gen. Genet.">
        <title>Regulation of SNM1, an inducible Saccharomyces cerevisiae gene required for repair of DNA cross-links.</title>
        <authorList>
            <person name="Wolter R."/>
            <person name="Siede W."/>
            <person name="Brendel M."/>
        </authorList>
    </citation>
    <scope>INDUCTION</scope>
</reference>
<reference key="6">
    <citation type="journal article" date="2000" name="Mutat. Res.">
        <title>Saccharomyces cerevisiae lacking Snm1, Rev3 or Rad51 have a normal S-phase but arrest permanently in G2 after cisplatin treatment.</title>
        <authorList>
            <person name="Grossmann K.F."/>
            <person name="Ward A.M."/>
            <person name="Moses R.E."/>
        </authorList>
    </citation>
    <scope>FUNCTION</scope>
</reference>
<reference key="7">
    <citation type="journal article" date="2001" name="Mutat. Res.">
        <title>S. cerevisiae has three pathways for DNA interstrand crosslink repair.</title>
        <authorList>
            <person name="Grossmann K.F."/>
            <person name="Ward A.M."/>
            <person name="Matkovic M.E."/>
            <person name="Folias A.E."/>
            <person name="Moses R.E."/>
        </authorList>
    </citation>
    <scope>FUNCTION</scope>
</reference>
<reference key="8">
    <citation type="journal article" date="2002" name="Nucleic Acids Res.">
        <title>Metallo-beta-lactamase fold within nucleic acids processing enzymes: the beta-CASP family.</title>
        <authorList>
            <person name="Callebaut I."/>
            <person name="Moshous D."/>
            <person name="Mornon J.-P."/>
            <person name="de Villartay J.-P."/>
        </authorList>
    </citation>
    <scope>DNA REPAIR METALLO-BETA-LACTAMASE FAMILY</scope>
</reference>
<reference key="9">
    <citation type="journal article" date="2003" name="DNA Repair">
        <title>The beta-lactamase motif in Snm1 is required for repair of DNA double-strand breaks caused by interstrand crosslinks in S. cerevisiae.</title>
        <authorList>
            <person name="Li X."/>
            <person name="Moses R.E."/>
        </authorList>
    </citation>
    <scope>FUNCTION</scope>
    <scope>MUTAGENESIS OF ASP-252</scope>
</reference>
<reference key="10">
    <citation type="journal article" date="2003" name="Nature">
        <title>Global analysis of protein expression in yeast.</title>
        <authorList>
            <person name="Ghaemmaghami S."/>
            <person name="Huh W.-K."/>
            <person name="Bower K."/>
            <person name="Howson R.W."/>
            <person name="Belle A."/>
            <person name="Dephoure N."/>
            <person name="O'Shea E.K."/>
            <person name="Weissman J.S."/>
        </authorList>
    </citation>
    <scope>LEVEL OF PROTEIN EXPRESSION [LARGE SCALE ANALYSIS]</scope>
</reference>
<reference key="11">
    <citation type="journal article" date="2004" name="Mol. Cell. Biol.">
        <title>Microhomology-dependent end joining and repair of transposon-induced DNA hairpins by host factors in Saccharomyces cerevisiae.</title>
        <authorList>
            <person name="Yu J."/>
            <person name="Marshall K."/>
            <person name="Yamaguchi M."/>
            <person name="Haber J.E."/>
            <person name="Weil C.F."/>
        </authorList>
    </citation>
    <scope>FUNCTION</scope>
</reference>
<reference key="12">
    <citation type="journal article" date="2005" name="DNA Repair">
        <title>The yeast Snm1 protein is a DNA 5'-exonuclease.</title>
        <authorList>
            <person name="Li X."/>
            <person name="Hejna J."/>
            <person name="Moses R.E."/>
        </authorList>
    </citation>
    <scope>FUNCTION</scope>
    <scope>MUTAGENESIS OF ASP-252</scope>
</reference>
<reference key="13">
    <citation type="journal article" date="2005" name="Mol. Cell. Biol.">
        <title>DNA interstrand cross-link repair in the Saccharomyces cerevisiae cell cycle: overlapping roles for PSO2 (SNM1) with MutS factors and EXO1 during S phase.</title>
        <authorList>
            <person name="Barber L.J."/>
            <person name="Ward T.A."/>
            <person name="Hartley J.A."/>
            <person name="McHugh P.J."/>
        </authorList>
    </citation>
    <scope>FUNCTION</scope>
</reference>
<reference key="14">
    <citation type="journal article" date="2008" name="Mol. Cell. Proteomics">
        <title>A multidimensional chromatography technology for in-depth phosphoproteome analysis.</title>
        <authorList>
            <person name="Albuquerque C.P."/>
            <person name="Smolka M.B."/>
            <person name="Payne S.H."/>
            <person name="Bafna V."/>
            <person name="Eng J."/>
            <person name="Zhou H."/>
        </authorList>
    </citation>
    <scope>IDENTIFICATION BY MASS SPECTROMETRY [LARGE SCALE ANALYSIS]</scope>
</reference>
<keyword id="KW-0227">DNA damage</keyword>
<keyword id="KW-0234">DNA repair</keyword>
<keyword id="KW-0269">Exonuclease</keyword>
<keyword id="KW-0378">Hydrolase</keyword>
<keyword id="KW-0460">Magnesium</keyword>
<keyword id="KW-0479">Metal-binding</keyword>
<keyword id="KW-0540">Nuclease</keyword>
<keyword id="KW-0539">Nucleus</keyword>
<keyword id="KW-1185">Reference proteome</keyword>
<keyword id="KW-0862">Zinc</keyword>
<keyword id="KW-0863">Zinc-finger</keyword>
<proteinExistence type="evidence at protein level"/>